<gene>
    <name evidence="9" type="ORF">TGRH88_069870</name>
</gene>
<dbReference type="EMBL" id="JAAUHK010000194">
    <property type="protein sequence ID" value="KAF4641177.1"/>
    <property type="molecule type" value="Genomic_DNA"/>
</dbReference>
<dbReference type="VEuPathDB" id="ToxoDB:TGME49_260470"/>
<dbReference type="Proteomes" id="UP000557509">
    <property type="component" value="Unassembled WGS sequence"/>
</dbReference>
<dbReference type="GO" id="GO:0031410">
    <property type="term" value="C:cytoplasmic vesicle"/>
    <property type="evidence" value="ECO:0007669"/>
    <property type="project" value="UniProtKB-KW"/>
</dbReference>
<dbReference type="GO" id="GO:0070258">
    <property type="term" value="C:inner membrane pellicle complex"/>
    <property type="evidence" value="ECO:0000314"/>
    <property type="project" value="UniProtKB"/>
</dbReference>
<dbReference type="GO" id="GO:0016020">
    <property type="term" value="C:membrane"/>
    <property type="evidence" value="ECO:0007669"/>
    <property type="project" value="UniProtKB-SubCell"/>
</dbReference>
<dbReference type="GO" id="GO:0020008">
    <property type="term" value="C:rhoptry"/>
    <property type="evidence" value="ECO:0000314"/>
    <property type="project" value="UniProtKB"/>
</dbReference>
<dbReference type="GO" id="GO:0007009">
    <property type="term" value="P:plasma membrane organization"/>
    <property type="evidence" value="ECO:0007669"/>
    <property type="project" value="TreeGrafter"/>
</dbReference>
<dbReference type="GO" id="GO:0045055">
    <property type="term" value="P:regulated exocytosis"/>
    <property type="evidence" value="ECO:0000315"/>
    <property type="project" value="UniProtKB"/>
</dbReference>
<dbReference type="CDD" id="cd00030">
    <property type="entry name" value="C2"/>
    <property type="match status" value="2"/>
</dbReference>
<dbReference type="CDD" id="cd08374">
    <property type="entry name" value="C2F_Ferlin"/>
    <property type="match status" value="1"/>
</dbReference>
<dbReference type="Gene3D" id="2.60.40.150">
    <property type="entry name" value="C2 domain"/>
    <property type="match status" value="5"/>
</dbReference>
<dbReference type="InterPro" id="IPR000008">
    <property type="entry name" value="C2_dom"/>
</dbReference>
<dbReference type="InterPro" id="IPR035892">
    <property type="entry name" value="C2_domain_sf"/>
</dbReference>
<dbReference type="InterPro" id="IPR037725">
    <property type="entry name" value="C2F_Ferlin"/>
</dbReference>
<dbReference type="InterPro" id="IPR037721">
    <property type="entry name" value="Ferlin"/>
</dbReference>
<dbReference type="PANTHER" id="PTHR12546">
    <property type="entry name" value="FER-1-LIKE"/>
    <property type="match status" value="1"/>
</dbReference>
<dbReference type="PANTHER" id="PTHR12546:SF33">
    <property type="entry name" value="SPERM VESICLE FUSION PROTEIN FER-1"/>
    <property type="match status" value="1"/>
</dbReference>
<dbReference type="Pfam" id="PF00168">
    <property type="entry name" value="C2"/>
    <property type="match status" value="5"/>
</dbReference>
<dbReference type="SMART" id="SM00239">
    <property type="entry name" value="C2"/>
    <property type="match status" value="5"/>
</dbReference>
<dbReference type="SUPFAM" id="SSF49562">
    <property type="entry name" value="C2 domain (Calcium/lipid-binding domain, CaLB)"/>
    <property type="match status" value="5"/>
</dbReference>
<dbReference type="PROSITE" id="PS50004">
    <property type="entry name" value="C2"/>
    <property type="match status" value="5"/>
</dbReference>
<comment type="function">
    <text evidence="4 5">Regulates rhoptry secretion (PubMed:30279285, PubMed:33803212). Required for completing the lytic cycle (PubMed:30279285). Required for host cell invasion (PubMed:30279285). Not required for microneme secretion and conoid extrusion (PubMed:30279285).</text>
</comment>
<comment type="subcellular location">
    <subcellularLocation>
        <location evidence="1">Membrane</location>
        <topology evidence="1">Single-pass membrane protein</topology>
    </subcellularLocation>
    <subcellularLocation>
        <location evidence="4">Inner membrane complex</location>
    </subcellularLocation>
    <subcellularLocation>
        <location evidence="4">Cytoplasmic vesicle</location>
        <location evidence="4">Secretory vesicle</location>
        <location evidence="4">Rhoptry</location>
    </subcellularLocation>
    <text evidence="4">In extracellular parasites, appears as defined cytoplasmic puncta suggestive of either inclusion bodies or a membranous structure of unknown identity; is also observed in clusters on the cytoplasmic side of the rhoptry membranes (PubMed:30279285). In intracellular parasites, appears throughout the cytoplasm; is enriched at the cytoplasmic side of the inner membrane complex (IMC) and within the internal structures of the conoid at the apical end (PubMed:30279285). Does not localize to the micronemes (PubMed:30279285).</text>
</comment>
<comment type="disruption phenotype">
    <text evidence="4">Conditional knockdown results in inability of parasites to form plaques in plaque assays after 7 and 14 days due to invasion defects (PubMed:30279285). Impaired rhoptry secretion (PubMed:30279285). No observable changes in the morphology or growth rate of intracellularly replicating parasites (PubMed:30279285). No significant effect on the localization, morphology and apical anchoring of the rhoptries (PubMed:30279285).</text>
</comment>
<comment type="similarity">
    <text evidence="8">Belongs to the ferlin family.</text>
</comment>
<protein>
    <recommendedName>
        <fullName evidence="6 7">Ferlin 2</fullName>
        <shortName evidence="7">FER2</shortName>
        <shortName evidence="6 7">TgFER2</shortName>
    </recommendedName>
</protein>
<sequence length="1426" mass="160861">MGKTKIYSVGFTVHEAQTLVTEKGQPVDPLVVVRCCGREYRTEIKYAKSNVVSWDESHTWTDLCLTDEEWETAYITFEVQAANAFWRNTLLGLVSVQLRLIQLRKTHQIRKALPLQHPDDTDVHGSLRVTVFACAPGEAPPSPGEEEVLEEEDHNDYDDLRKAVIDTNQVVEREAGSRLYHVYVTAYRVEDLPRSSKGARDPFVTCEFAGCKLKSTQARGCCSHTFNECFRFPVVTPLPEDAILIKIWDWNFMKADELIAVGRISFSELRTRQMVPRWFNLYGFDDEEVAQATKVAGQGGRLVANCYLGRILLGARAERLTKEDDLMPAHTVAARPYETPPVIPLAVLADVYEVQGAPGEKVSVEIWCGPARARTKWVTGLETKAAQRAGVAPQAFNRAMEGALGVASYLRGDIPEGEDRFPFDNTEGRVEDLRLVVPEDTKQQWDIIISLYVRGTTKGFMGDTRIAFQRLKMSKIPGHVHNNPRAPIWVPLISTPPFESVKPAPAILMVIEKSKVEAFARSKRKHVTAVGYQLRAYVYAARNLLSPSGALPNPFVQVACAGTSRETEVFEQTSSPVFMDCLLLDITMMTDPVSRLPTVAPIVVTLFEQRSWGIQFLGRATCHYDRLRGRLKPGESPTVAEPRWIKLRGGKYANRHLGDVLLLLELIRKRDAEIIPAFPMRPVVNMCNLTFSCLGVRSLYMTQRAKRLDYVSIRKGQDKKTELRRIRGPLLRISVSSYASAGRGNNEAILRYERNLPEDPTTVNKLWTTVTKAANADIFKVVNMEIDVPVDPIYDPRLVVQVYDRKQKPKYFIGEYSMSLVPLIPWVLDQQSAIEAVSPVNDFTDTVDLKHLGGLLRGFHGNSKNRGTGQIGLEALSAADRETADAHKEKTLAQSRFATYDPDNKTFSDSWLLPSGLPKILVSSYAVPGFRCDVIYTNMFTLNVYIPAKFVLFAEGKRAADKKTKEQYARPSVDSTLEQFLDDVIFPSDSLKKSVMGDIDVTGFVKFFVNLTHHEEPNPHVDSSAAEWASSEDRMRRHLRGEDAYPKLLKIRVYVIRAISLYVGDDRILPNPYLLFNLGDKSDTLRAEAKPNTHNPEFFTVWEKDVMFPDDSQFELQVWSAHEGTSGGLDDIFIGSTCIDLEERWFSKEWQKSMSKNQVPMEYRPLKQMPSGSFKGTVEMWVELMDFQKAGEVPKFDLQSPAATEVEIRVIVWGARNLNFKALGKDFVDAMIRCNLDCTGYRGSQPIAQQTDVHYYSKTGAAIFNWRMVYSRVVMPVSTCVLQIAAYDNRNMGESPFIGEVNLELRRYLERVASTLNSIDVDAELKLINRSRESADVSSFGFVQVSLQFISQSEATSKPVGLGREPPNRDPRLTTPQEGRKWEDVLGSAGLRVDYRPLWYWVRVAAVVFLSIWIFVVAFLYPSLLG</sequence>
<feature type="chain" id="PRO_0000461787" description="Ferlin 2">
    <location>
        <begin position="1"/>
        <end position="1426"/>
    </location>
</feature>
<feature type="transmembrane region" description="Helical" evidence="1">
    <location>
        <begin position="1404"/>
        <end position="1424"/>
    </location>
</feature>
<feature type="domain" description="C2 1" evidence="2">
    <location>
        <begin position="1"/>
        <end position="111"/>
    </location>
</feature>
<feature type="domain" description="C2 2" evidence="2">
    <location>
        <begin position="161"/>
        <end position="279"/>
    </location>
</feature>
<feature type="domain" description="C2 3" evidence="2">
    <location>
        <begin position="512"/>
        <end position="638"/>
    </location>
</feature>
<feature type="domain" description="C2 4" evidence="2">
    <location>
        <begin position="1031"/>
        <end position="1154"/>
    </location>
</feature>
<feature type="domain" description="C2 5" evidence="2">
    <location>
        <begin position="1189"/>
        <end position="1318"/>
    </location>
</feature>
<feature type="region of interest" description="Disordered" evidence="3">
    <location>
        <begin position="1357"/>
        <end position="1377"/>
    </location>
</feature>
<feature type="compositionally biased region" description="Basic and acidic residues" evidence="3">
    <location>
        <begin position="1366"/>
        <end position="1377"/>
    </location>
</feature>
<accession>A0A7J6K2G0</accession>
<proteinExistence type="inferred from homology"/>
<evidence type="ECO:0000255" key="1"/>
<evidence type="ECO:0000255" key="2">
    <source>
        <dbReference type="PROSITE-ProRule" id="PRU00041"/>
    </source>
</evidence>
<evidence type="ECO:0000256" key="3">
    <source>
        <dbReference type="SAM" id="MobiDB-lite"/>
    </source>
</evidence>
<evidence type="ECO:0000269" key="4">
    <source>
    </source>
</evidence>
<evidence type="ECO:0000269" key="5">
    <source>
    </source>
</evidence>
<evidence type="ECO:0000303" key="6">
    <source>
    </source>
</evidence>
<evidence type="ECO:0000303" key="7">
    <source>
    </source>
</evidence>
<evidence type="ECO:0000305" key="8"/>
<evidence type="ECO:0000312" key="9">
    <source>
        <dbReference type="EMBL" id="KAF4641177.1"/>
    </source>
</evidence>
<evidence type="ECO:0000312" key="10">
    <source>
        <dbReference type="Proteomes" id="UP000557509"/>
    </source>
</evidence>
<organism evidence="10">
    <name type="scientific">Toxoplasma gondii</name>
    <dbReference type="NCBI Taxonomy" id="5811"/>
    <lineage>
        <taxon>Eukaryota</taxon>
        <taxon>Sar</taxon>
        <taxon>Alveolata</taxon>
        <taxon>Apicomplexa</taxon>
        <taxon>Conoidasida</taxon>
        <taxon>Coccidia</taxon>
        <taxon>Eucoccidiorida</taxon>
        <taxon>Eimeriorina</taxon>
        <taxon>Sarcocystidae</taxon>
        <taxon>Toxoplasma</taxon>
    </lineage>
</organism>
<reference evidence="10" key="1">
    <citation type="submission" date="2020-03" db="EMBL/GenBank/DDBJ databases">
        <title>Genome sequence of Toxoplasma gondii RH-88 strain.</title>
        <authorList>
            <person name="Lorenzi H.A."/>
            <person name="Venepally P."/>
            <person name="Rozenberg A."/>
            <person name="Sibley D."/>
        </authorList>
    </citation>
    <scope>NUCLEOTIDE SEQUENCE [LARGE SCALE GENOMIC DNA]</scope>
    <source>
        <strain evidence="10">RH-88</strain>
    </source>
</reference>
<reference evidence="8" key="2">
    <citation type="journal article" date="2018" name="MBio">
        <title>A Member of the Ferlin Calcium Sensor Family Is Essential for Toxoplasma gondii Rhoptry Secretion.</title>
        <authorList>
            <person name="Coleman B.I."/>
            <person name="Saha S."/>
            <person name="Sato S."/>
            <person name="Engelberg K."/>
            <person name="Ferguson D.J.P."/>
            <person name="Coppens I."/>
            <person name="Lodoen M.B."/>
            <person name="Gubbels M.J."/>
        </authorList>
    </citation>
    <scope>FUNCTION</scope>
    <scope>SUBCELLULAR LOCATION</scope>
    <scope>DISRUPTION PHENOTYPE</scope>
    <source>
        <strain evidence="6">RH</strain>
    </source>
</reference>
<reference evidence="8" key="3">
    <citation type="journal article" date="2021" name="Life">
        <title>Ferlins and TgDOC2 in Toxoplasma Microneme, Rhoptry and Dense Granule Secretion.</title>
        <authorList>
            <person name="Tagoe D.N.A."/>
            <person name="Drozda A.A."/>
            <person name="Falco J.A."/>
            <person name="Bechtel T.J."/>
            <person name="Weerapana E."/>
            <person name="Gubbels M.J."/>
        </authorList>
    </citation>
    <scope>FUNCTION</scope>
    <source>
        <strain evidence="7">RH</strain>
    </source>
</reference>
<keyword id="KW-0968">Cytoplasmic vesicle</keyword>
<keyword id="KW-0268">Exocytosis</keyword>
<keyword id="KW-0472">Membrane</keyword>
<keyword id="KW-1185">Reference proteome</keyword>
<keyword id="KW-0677">Repeat</keyword>
<keyword id="KW-0346">Stress response</keyword>
<keyword id="KW-0812">Transmembrane</keyword>
<keyword id="KW-1133">Transmembrane helix</keyword>
<name>FER2_TOXGO</name>